<organism>
    <name type="scientific">Sulfurisphaera tokodaii (strain DSM 16993 / JCM 10545 / NBRC 100140 / 7)</name>
    <name type="common">Sulfolobus tokodaii</name>
    <dbReference type="NCBI Taxonomy" id="273063"/>
    <lineage>
        <taxon>Archaea</taxon>
        <taxon>Thermoproteota</taxon>
        <taxon>Thermoprotei</taxon>
        <taxon>Sulfolobales</taxon>
        <taxon>Sulfolobaceae</taxon>
        <taxon>Sulfurisphaera</taxon>
    </lineage>
</organism>
<proteinExistence type="inferred from homology"/>
<accession>Q975I8</accession>
<sequence length="88" mass="10277">MKSKEILGYDIKEISNQTVEQLIEKKKELQGKLNDLQQELLKRKVEARMGTLKNTASIRNLRKDIARILTLLSIINKEIENKKKESKK</sequence>
<evidence type="ECO:0000305" key="1"/>
<gene>
    <name type="primary">rpl29</name>
    <name type="ordered locus">STK_04237</name>
    <name type="ORF">STS061</name>
</gene>
<feature type="chain" id="PRO_0000130525" description="Large ribosomal subunit protein uL29">
    <location>
        <begin position="1"/>
        <end position="88"/>
    </location>
</feature>
<keyword id="KW-1185">Reference proteome</keyword>
<keyword id="KW-0687">Ribonucleoprotein</keyword>
<keyword id="KW-0689">Ribosomal protein</keyword>
<dbReference type="EMBL" id="BA000023">
    <property type="protein sequence ID" value="BAB65412.1"/>
    <property type="molecule type" value="Genomic_DNA"/>
</dbReference>
<dbReference type="RefSeq" id="WP_010978395.1">
    <property type="nucleotide sequence ID" value="NC_003106.2"/>
</dbReference>
<dbReference type="SMR" id="Q975I8"/>
<dbReference type="STRING" id="273063.STK_04237"/>
<dbReference type="GeneID" id="1458359"/>
<dbReference type="KEGG" id="sto:STK_04237"/>
<dbReference type="PATRIC" id="fig|273063.9.peg.493"/>
<dbReference type="eggNOG" id="arCOG00785">
    <property type="taxonomic scope" value="Archaea"/>
</dbReference>
<dbReference type="OrthoDB" id="11736at2157"/>
<dbReference type="Proteomes" id="UP000001015">
    <property type="component" value="Chromosome"/>
</dbReference>
<dbReference type="GO" id="GO:1990904">
    <property type="term" value="C:ribonucleoprotein complex"/>
    <property type="evidence" value="ECO:0007669"/>
    <property type="project" value="UniProtKB-KW"/>
</dbReference>
<dbReference type="GO" id="GO:0005840">
    <property type="term" value="C:ribosome"/>
    <property type="evidence" value="ECO:0007669"/>
    <property type="project" value="UniProtKB-KW"/>
</dbReference>
<dbReference type="GO" id="GO:0003735">
    <property type="term" value="F:structural constituent of ribosome"/>
    <property type="evidence" value="ECO:0007669"/>
    <property type="project" value="InterPro"/>
</dbReference>
<dbReference type="GO" id="GO:0006412">
    <property type="term" value="P:translation"/>
    <property type="evidence" value="ECO:0007669"/>
    <property type="project" value="UniProtKB-UniRule"/>
</dbReference>
<dbReference type="Gene3D" id="1.10.287.310">
    <property type="match status" value="1"/>
</dbReference>
<dbReference type="HAMAP" id="MF_00374">
    <property type="entry name" value="Ribosomal_uL29"/>
    <property type="match status" value="1"/>
</dbReference>
<dbReference type="InterPro" id="IPR001854">
    <property type="entry name" value="Ribosomal_uL29"/>
</dbReference>
<dbReference type="InterPro" id="IPR018254">
    <property type="entry name" value="Ribosomal_uL29_CS"/>
</dbReference>
<dbReference type="InterPro" id="IPR036049">
    <property type="entry name" value="Ribosomal_uL29_sf"/>
</dbReference>
<dbReference type="NCBIfam" id="TIGR00012">
    <property type="entry name" value="L29"/>
    <property type="match status" value="1"/>
</dbReference>
<dbReference type="Pfam" id="PF00831">
    <property type="entry name" value="Ribosomal_L29"/>
    <property type="match status" value="1"/>
</dbReference>
<dbReference type="SUPFAM" id="SSF46561">
    <property type="entry name" value="Ribosomal protein L29 (L29p)"/>
    <property type="match status" value="1"/>
</dbReference>
<dbReference type="PROSITE" id="PS00579">
    <property type="entry name" value="RIBOSOMAL_L29"/>
    <property type="match status" value="1"/>
</dbReference>
<comment type="similarity">
    <text evidence="1">Belongs to the universal ribosomal protein uL29 family.</text>
</comment>
<name>RL29_SULTO</name>
<reference key="1">
    <citation type="journal article" date="2001" name="DNA Res.">
        <title>Complete genome sequence of an aerobic thermoacidophilic Crenarchaeon, Sulfolobus tokodaii strain7.</title>
        <authorList>
            <person name="Kawarabayasi Y."/>
            <person name="Hino Y."/>
            <person name="Horikawa H."/>
            <person name="Jin-no K."/>
            <person name="Takahashi M."/>
            <person name="Sekine M."/>
            <person name="Baba S."/>
            <person name="Ankai A."/>
            <person name="Kosugi H."/>
            <person name="Hosoyama A."/>
            <person name="Fukui S."/>
            <person name="Nagai Y."/>
            <person name="Nishijima K."/>
            <person name="Otsuka R."/>
            <person name="Nakazawa H."/>
            <person name="Takamiya M."/>
            <person name="Kato Y."/>
            <person name="Yoshizawa T."/>
            <person name="Tanaka T."/>
            <person name="Kudoh Y."/>
            <person name="Yamazaki J."/>
            <person name="Kushida N."/>
            <person name="Oguchi A."/>
            <person name="Aoki K."/>
            <person name="Masuda S."/>
            <person name="Yanagii M."/>
            <person name="Nishimura M."/>
            <person name="Yamagishi A."/>
            <person name="Oshima T."/>
            <person name="Kikuchi H."/>
        </authorList>
    </citation>
    <scope>NUCLEOTIDE SEQUENCE [LARGE SCALE GENOMIC DNA]</scope>
    <source>
        <strain>DSM 16993 / JCM 10545 / NBRC 100140 / 7</strain>
    </source>
</reference>
<protein>
    <recommendedName>
        <fullName evidence="1">Large ribosomal subunit protein uL29</fullName>
    </recommendedName>
    <alternativeName>
        <fullName>50S ribosomal protein L29</fullName>
    </alternativeName>
</protein>